<protein>
    <recommendedName>
        <fullName evidence="1">Large ribosomal subunit protein uL13</fullName>
    </recommendedName>
    <alternativeName>
        <fullName evidence="2">50S ribosomal protein L13</fullName>
    </alternativeName>
</protein>
<evidence type="ECO:0000255" key="1">
    <source>
        <dbReference type="HAMAP-Rule" id="MF_01366"/>
    </source>
</evidence>
<evidence type="ECO:0000305" key="2"/>
<comment type="function">
    <text evidence="1">This protein is one of the early assembly proteins of the 50S ribosomal subunit, although it is not seen to bind rRNA by itself. It is important during the early stages of 50S assembly.</text>
</comment>
<comment type="subunit">
    <text evidence="1">Part of the 50S ribosomal subunit.</text>
</comment>
<comment type="similarity">
    <text evidence="1">Belongs to the universal ribosomal protein uL13 family.</text>
</comment>
<sequence length="142" mass="16046">MKTFTAKPETVKRDWYVVDANGKTLGRLATELARRLRGKHKAEYTPHVDTGDYIIVLNADKVAVTGNKRNDKIYYHHTGHIGGIKQATFEEMIARRPERVIEIAVKGMLPKGPLGRAMFRKLKVYAGTEHNHAAQQPQVLDI</sequence>
<gene>
    <name evidence="1" type="primary">rplM</name>
    <name type="ordered locus">PC1_0292</name>
</gene>
<feature type="chain" id="PRO_1000214959" description="Large ribosomal subunit protein uL13">
    <location>
        <begin position="1"/>
        <end position="142"/>
    </location>
</feature>
<organism>
    <name type="scientific">Pectobacterium carotovorum subsp. carotovorum (strain PC1)</name>
    <dbReference type="NCBI Taxonomy" id="561230"/>
    <lineage>
        <taxon>Bacteria</taxon>
        <taxon>Pseudomonadati</taxon>
        <taxon>Pseudomonadota</taxon>
        <taxon>Gammaproteobacteria</taxon>
        <taxon>Enterobacterales</taxon>
        <taxon>Pectobacteriaceae</taxon>
        <taxon>Pectobacterium</taxon>
    </lineage>
</organism>
<keyword id="KW-0687">Ribonucleoprotein</keyword>
<keyword id="KW-0689">Ribosomal protein</keyword>
<dbReference type="EMBL" id="CP001657">
    <property type="protein sequence ID" value="ACT11351.1"/>
    <property type="molecule type" value="Genomic_DNA"/>
</dbReference>
<dbReference type="RefSeq" id="WP_012773011.1">
    <property type="nucleotide sequence ID" value="NC_012917.1"/>
</dbReference>
<dbReference type="SMR" id="C6DIQ1"/>
<dbReference type="STRING" id="561230.PC1_0292"/>
<dbReference type="GeneID" id="67795912"/>
<dbReference type="KEGG" id="pct:PC1_0292"/>
<dbReference type="eggNOG" id="COG0102">
    <property type="taxonomic scope" value="Bacteria"/>
</dbReference>
<dbReference type="HOGENOM" id="CLU_082184_2_2_6"/>
<dbReference type="OrthoDB" id="9801330at2"/>
<dbReference type="Proteomes" id="UP000002736">
    <property type="component" value="Chromosome"/>
</dbReference>
<dbReference type="GO" id="GO:0022625">
    <property type="term" value="C:cytosolic large ribosomal subunit"/>
    <property type="evidence" value="ECO:0007669"/>
    <property type="project" value="TreeGrafter"/>
</dbReference>
<dbReference type="GO" id="GO:0003729">
    <property type="term" value="F:mRNA binding"/>
    <property type="evidence" value="ECO:0007669"/>
    <property type="project" value="TreeGrafter"/>
</dbReference>
<dbReference type="GO" id="GO:0003735">
    <property type="term" value="F:structural constituent of ribosome"/>
    <property type="evidence" value="ECO:0007669"/>
    <property type="project" value="InterPro"/>
</dbReference>
<dbReference type="GO" id="GO:0017148">
    <property type="term" value="P:negative regulation of translation"/>
    <property type="evidence" value="ECO:0007669"/>
    <property type="project" value="TreeGrafter"/>
</dbReference>
<dbReference type="GO" id="GO:0006412">
    <property type="term" value="P:translation"/>
    <property type="evidence" value="ECO:0007669"/>
    <property type="project" value="UniProtKB-UniRule"/>
</dbReference>
<dbReference type="CDD" id="cd00392">
    <property type="entry name" value="Ribosomal_L13"/>
    <property type="match status" value="1"/>
</dbReference>
<dbReference type="FunFam" id="3.90.1180.10:FF:000001">
    <property type="entry name" value="50S ribosomal protein L13"/>
    <property type="match status" value="1"/>
</dbReference>
<dbReference type="Gene3D" id="3.90.1180.10">
    <property type="entry name" value="Ribosomal protein L13"/>
    <property type="match status" value="1"/>
</dbReference>
<dbReference type="HAMAP" id="MF_01366">
    <property type="entry name" value="Ribosomal_uL13"/>
    <property type="match status" value="1"/>
</dbReference>
<dbReference type="InterPro" id="IPR005822">
    <property type="entry name" value="Ribosomal_uL13"/>
</dbReference>
<dbReference type="InterPro" id="IPR005823">
    <property type="entry name" value="Ribosomal_uL13_bac-type"/>
</dbReference>
<dbReference type="InterPro" id="IPR023563">
    <property type="entry name" value="Ribosomal_uL13_CS"/>
</dbReference>
<dbReference type="InterPro" id="IPR036899">
    <property type="entry name" value="Ribosomal_uL13_sf"/>
</dbReference>
<dbReference type="NCBIfam" id="TIGR01066">
    <property type="entry name" value="rplM_bact"/>
    <property type="match status" value="1"/>
</dbReference>
<dbReference type="PANTHER" id="PTHR11545:SF2">
    <property type="entry name" value="LARGE RIBOSOMAL SUBUNIT PROTEIN UL13M"/>
    <property type="match status" value="1"/>
</dbReference>
<dbReference type="PANTHER" id="PTHR11545">
    <property type="entry name" value="RIBOSOMAL PROTEIN L13"/>
    <property type="match status" value="1"/>
</dbReference>
<dbReference type="Pfam" id="PF00572">
    <property type="entry name" value="Ribosomal_L13"/>
    <property type="match status" value="1"/>
</dbReference>
<dbReference type="PIRSF" id="PIRSF002181">
    <property type="entry name" value="Ribosomal_L13"/>
    <property type="match status" value="1"/>
</dbReference>
<dbReference type="SUPFAM" id="SSF52161">
    <property type="entry name" value="Ribosomal protein L13"/>
    <property type="match status" value="1"/>
</dbReference>
<dbReference type="PROSITE" id="PS00783">
    <property type="entry name" value="RIBOSOMAL_L13"/>
    <property type="match status" value="1"/>
</dbReference>
<reference key="1">
    <citation type="submission" date="2009-07" db="EMBL/GenBank/DDBJ databases">
        <title>Complete sequence of Pectobacterium carotovorum subsp. carotovorum PC1.</title>
        <authorList>
            <consortium name="US DOE Joint Genome Institute"/>
            <person name="Lucas S."/>
            <person name="Copeland A."/>
            <person name="Lapidus A."/>
            <person name="Glavina del Rio T."/>
            <person name="Tice H."/>
            <person name="Bruce D."/>
            <person name="Goodwin L."/>
            <person name="Pitluck S."/>
            <person name="Munk A.C."/>
            <person name="Brettin T."/>
            <person name="Detter J.C."/>
            <person name="Han C."/>
            <person name="Tapia R."/>
            <person name="Larimer F."/>
            <person name="Land M."/>
            <person name="Hauser L."/>
            <person name="Kyrpides N."/>
            <person name="Mikhailova N."/>
            <person name="Balakrishnan V."/>
            <person name="Glasner J."/>
            <person name="Perna N.T."/>
        </authorList>
    </citation>
    <scope>NUCLEOTIDE SEQUENCE [LARGE SCALE GENOMIC DNA]</scope>
    <source>
        <strain>PC1</strain>
    </source>
</reference>
<accession>C6DIQ1</accession>
<proteinExistence type="inferred from homology"/>
<name>RL13_PECCP</name>